<reference key="1">
    <citation type="journal article" date="2008" name="Environ. Microbiol.">
        <title>The genome of Erwinia tasmaniensis strain Et1/99, a non-pathogenic bacterium in the genus Erwinia.</title>
        <authorList>
            <person name="Kube M."/>
            <person name="Migdoll A.M."/>
            <person name="Mueller I."/>
            <person name="Kuhl H."/>
            <person name="Beck A."/>
            <person name="Reinhardt R."/>
            <person name="Geider K."/>
        </authorList>
    </citation>
    <scope>NUCLEOTIDE SEQUENCE [LARGE SCALE GENOMIC DNA]</scope>
    <source>
        <strain>DSM 17950 / CFBP 7177 / CIP 109463 / NCPPB 4357 / Et1/99</strain>
    </source>
</reference>
<accession>B2VJK3</accession>
<keyword id="KW-0067">ATP-binding</keyword>
<keyword id="KW-0997">Cell inner membrane</keyword>
<keyword id="KW-1003">Cell membrane</keyword>
<keyword id="KW-0406">Ion transport</keyword>
<keyword id="KW-0460">Magnesium</keyword>
<keyword id="KW-0472">Membrane</keyword>
<keyword id="KW-0479">Metal-binding</keyword>
<keyword id="KW-0547">Nucleotide-binding</keyword>
<keyword id="KW-0597">Phosphoprotein</keyword>
<keyword id="KW-0630">Potassium</keyword>
<keyword id="KW-0633">Potassium transport</keyword>
<keyword id="KW-1185">Reference proteome</keyword>
<keyword id="KW-1278">Translocase</keyword>
<keyword id="KW-0812">Transmembrane</keyword>
<keyword id="KW-1133">Transmembrane helix</keyword>
<keyword id="KW-0813">Transport</keyword>
<gene>
    <name evidence="1" type="primary">kdpB</name>
    <name type="ordered locus">ETA_33640</name>
</gene>
<comment type="function">
    <text evidence="1">Part of the high-affinity ATP-driven potassium transport (or Kdp) system, which catalyzes the hydrolysis of ATP coupled with the electrogenic transport of potassium into the cytoplasm. This subunit is responsible for energy coupling to the transport system and for the release of the potassium ions to the cytoplasm.</text>
</comment>
<comment type="catalytic activity">
    <reaction evidence="1">
        <text>K(+)(out) + ATP + H2O = K(+)(in) + ADP + phosphate + H(+)</text>
        <dbReference type="Rhea" id="RHEA:16777"/>
        <dbReference type="ChEBI" id="CHEBI:15377"/>
        <dbReference type="ChEBI" id="CHEBI:15378"/>
        <dbReference type="ChEBI" id="CHEBI:29103"/>
        <dbReference type="ChEBI" id="CHEBI:30616"/>
        <dbReference type="ChEBI" id="CHEBI:43474"/>
        <dbReference type="ChEBI" id="CHEBI:456216"/>
        <dbReference type="EC" id="7.2.2.6"/>
    </reaction>
    <physiologicalReaction direction="left-to-right" evidence="1">
        <dbReference type="Rhea" id="RHEA:16778"/>
    </physiologicalReaction>
</comment>
<comment type="subunit">
    <text evidence="1">The system is composed of three essential subunits: KdpA, KdpB and KdpC.</text>
</comment>
<comment type="subcellular location">
    <subcellularLocation>
        <location evidence="1">Cell inner membrane</location>
        <topology evidence="1">Multi-pass membrane protein</topology>
    </subcellularLocation>
</comment>
<comment type="similarity">
    <text evidence="1">Belongs to the cation transport ATPase (P-type) (TC 3.A.3) family. Type IA subfamily.</text>
</comment>
<feature type="chain" id="PRO_1000114954" description="Potassium-transporting ATPase ATP-binding subunit">
    <location>
        <begin position="1"/>
        <end position="682"/>
    </location>
</feature>
<feature type="transmembrane region" description="Helical" evidence="1">
    <location>
        <begin position="35"/>
        <end position="55"/>
    </location>
</feature>
<feature type="transmembrane region" description="Helical" evidence="1">
    <location>
        <begin position="62"/>
        <end position="82"/>
    </location>
</feature>
<feature type="transmembrane region" description="Helical" evidence="1">
    <location>
        <begin position="219"/>
        <end position="239"/>
    </location>
</feature>
<feature type="transmembrane region" description="Helical" evidence="1">
    <location>
        <begin position="254"/>
        <end position="274"/>
    </location>
</feature>
<feature type="transmembrane region" description="Helical" evidence="1">
    <location>
        <begin position="577"/>
        <end position="597"/>
    </location>
</feature>
<feature type="transmembrane region" description="Helical" evidence="1">
    <location>
        <begin position="616"/>
        <end position="636"/>
    </location>
</feature>
<feature type="transmembrane region" description="Helical" evidence="1">
    <location>
        <begin position="656"/>
        <end position="676"/>
    </location>
</feature>
<feature type="active site" description="4-aspartylphosphate intermediate" evidence="1">
    <location>
        <position position="307"/>
    </location>
</feature>
<feature type="binding site" evidence="1">
    <location>
        <position position="344"/>
    </location>
    <ligand>
        <name>ATP</name>
        <dbReference type="ChEBI" id="CHEBI:30616"/>
    </ligand>
</feature>
<feature type="binding site" evidence="1">
    <location>
        <position position="348"/>
    </location>
    <ligand>
        <name>ATP</name>
        <dbReference type="ChEBI" id="CHEBI:30616"/>
    </ligand>
</feature>
<feature type="binding site" evidence="1">
    <location>
        <begin position="377"/>
        <end position="384"/>
    </location>
    <ligand>
        <name>ATP</name>
        <dbReference type="ChEBI" id="CHEBI:30616"/>
    </ligand>
</feature>
<feature type="binding site" evidence="1">
    <location>
        <position position="395"/>
    </location>
    <ligand>
        <name>ATP</name>
        <dbReference type="ChEBI" id="CHEBI:30616"/>
    </ligand>
</feature>
<feature type="binding site" evidence="1">
    <location>
        <position position="518"/>
    </location>
    <ligand>
        <name>Mg(2+)</name>
        <dbReference type="ChEBI" id="CHEBI:18420"/>
    </ligand>
</feature>
<feature type="binding site" evidence="1">
    <location>
        <position position="522"/>
    </location>
    <ligand>
        <name>Mg(2+)</name>
        <dbReference type="ChEBI" id="CHEBI:18420"/>
    </ligand>
</feature>
<evidence type="ECO:0000255" key="1">
    <source>
        <dbReference type="HAMAP-Rule" id="MF_00285"/>
    </source>
</evidence>
<proteinExistence type="inferred from homology"/>
<dbReference type="EC" id="7.2.2.6" evidence="1"/>
<dbReference type="EMBL" id="CU468135">
    <property type="protein sequence ID" value="CAO98410.1"/>
    <property type="molecule type" value="Genomic_DNA"/>
</dbReference>
<dbReference type="RefSeq" id="WP_012443033.1">
    <property type="nucleotide sequence ID" value="NC_010694.1"/>
</dbReference>
<dbReference type="SMR" id="B2VJK3"/>
<dbReference type="STRING" id="465817.ETA_33640"/>
<dbReference type="KEGG" id="eta:ETA_33640"/>
<dbReference type="eggNOG" id="COG2216">
    <property type="taxonomic scope" value="Bacteria"/>
</dbReference>
<dbReference type="HOGENOM" id="CLU_025728_2_0_6"/>
<dbReference type="OrthoDB" id="9814270at2"/>
<dbReference type="Proteomes" id="UP000001726">
    <property type="component" value="Chromosome"/>
</dbReference>
<dbReference type="GO" id="GO:0005886">
    <property type="term" value="C:plasma membrane"/>
    <property type="evidence" value="ECO:0007669"/>
    <property type="project" value="UniProtKB-SubCell"/>
</dbReference>
<dbReference type="GO" id="GO:0005524">
    <property type="term" value="F:ATP binding"/>
    <property type="evidence" value="ECO:0007669"/>
    <property type="project" value="UniProtKB-UniRule"/>
</dbReference>
<dbReference type="GO" id="GO:0016887">
    <property type="term" value="F:ATP hydrolysis activity"/>
    <property type="evidence" value="ECO:0007669"/>
    <property type="project" value="InterPro"/>
</dbReference>
<dbReference type="GO" id="GO:0000287">
    <property type="term" value="F:magnesium ion binding"/>
    <property type="evidence" value="ECO:0007669"/>
    <property type="project" value="UniProtKB-UniRule"/>
</dbReference>
<dbReference type="GO" id="GO:0008556">
    <property type="term" value="F:P-type potassium transmembrane transporter activity"/>
    <property type="evidence" value="ECO:0007669"/>
    <property type="project" value="UniProtKB-UniRule"/>
</dbReference>
<dbReference type="CDD" id="cd02078">
    <property type="entry name" value="P-type_ATPase_K"/>
    <property type="match status" value="1"/>
</dbReference>
<dbReference type="FunFam" id="2.70.150.10:FF:000010">
    <property type="entry name" value="Potassium-transporting ATPase ATP-binding subunit"/>
    <property type="match status" value="1"/>
</dbReference>
<dbReference type="FunFam" id="3.40.1110.10:FF:000007">
    <property type="entry name" value="Potassium-transporting ATPase ATP-binding subunit"/>
    <property type="match status" value="1"/>
</dbReference>
<dbReference type="Gene3D" id="3.40.1110.10">
    <property type="entry name" value="Calcium-transporting ATPase, cytoplasmic domain N"/>
    <property type="match status" value="1"/>
</dbReference>
<dbReference type="Gene3D" id="2.70.150.10">
    <property type="entry name" value="Calcium-transporting ATPase, cytoplasmic transduction domain A"/>
    <property type="match status" value="1"/>
</dbReference>
<dbReference type="Gene3D" id="3.40.50.1000">
    <property type="entry name" value="HAD superfamily/HAD-like"/>
    <property type="match status" value="1"/>
</dbReference>
<dbReference type="HAMAP" id="MF_00285">
    <property type="entry name" value="KdpB"/>
    <property type="match status" value="1"/>
</dbReference>
<dbReference type="InterPro" id="IPR023299">
    <property type="entry name" value="ATPase_P-typ_cyto_dom_N"/>
</dbReference>
<dbReference type="InterPro" id="IPR018303">
    <property type="entry name" value="ATPase_P-typ_P_site"/>
</dbReference>
<dbReference type="InterPro" id="IPR023298">
    <property type="entry name" value="ATPase_P-typ_TM_dom_sf"/>
</dbReference>
<dbReference type="InterPro" id="IPR008250">
    <property type="entry name" value="ATPase_P-typ_transduc_dom_A_sf"/>
</dbReference>
<dbReference type="InterPro" id="IPR036412">
    <property type="entry name" value="HAD-like_sf"/>
</dbReference>
<dbReference type="InterPro" id="IPR023214">
    <property type="entry name" value="HAD_sf"/>
</dbReference>
<dbReference type="InterPro" id="IPR006391">
    <property type="entry name" value="P-type_ATPase_bsu_IA"/>
</dbReference>
<dbReference type="InterPro" id="IPR001757">
    <property type="entry name" value="P_typ_ATPase"/>
</dbReference>
<dbReference type="InterPro" id="IPR044492">
    <property type="entry name" value="P_typ_ATPase_HD_dom"/>
</dbReference>
<dbReference type="NCBIfam" id="TIGR01494">
    <property type="entry name" value="ATPase_P-type"/>
    <property type="match status" value="2"/>
</dbReference>
<dbReference type="NCBIfam" id="TIGR01497">
    <property type="entry name" value="kdpB"/>
    <property type="match status" value="1"/>
</dbReference>
<dbReference type="PANTHER" id="PTHR43743">
    <property type="entry name" value="POTASSIUM-TRANSPORTING ATPASE ATP-BINDING SUBUNIT"/>
    <property type="match status" value="1"/>
</dbReference>
<dbReference type="PANTHER" id="PTHR43743:SF1">
    <property type="entry name" value="POTASSIUM-TRANSPORTING ATPASE ATP-BINDING SUBUNIT"/>
    <property type="match status" value="1"/>
</dbReference>
<dbReference type="Pfam" id="PF00122">
    <property type="entry name" value="E1-E2_ATPase"/>
    <property type="match status" value="1"/>
</dbReference>
<dbReference type="Pfam" id="PF00702">
    <property type="entry name" value="Hydrolase"/>
    <property type="match status" value="1"/>
</dbReference>
<dbReference type="PRINTS" id="PR00119">
    <property type="entry name" value="CATATPASE"/>
</dbReference>
<dbReference type="SFLD" id="SFLDG00002">
    <property type="entry name" value="C1.7:_P-type_atpase_like"/>
    <property type="match status" value="1"/>
</dbReference>
<dbReference type="SFLD" id="SFLDF00027">
    <property type="entry name" value="p-type_atpase"/>
    <property type="match status" value="1"/>
</dbReference>
<dbReference type="SUPFAM" id="SSF81653">
    <property type="entry name" value="Calcium ATPase, transduction domain A"/>
    <property type="match status" value="1"/>
</dbReference>
<dbReference type="SUPFAM" id="SSF81665">
    <property type="entry name" value="Calcium ATPase, transmembrane domain M"/>
    <property type="match status" value="1"/>
</dbReference>
<dbReference type="SUPFAM" id="SSF56784">
    <property type="entry name" value="HAD-like"/>
    <property type="match status" value="1"/>
</dbReference>
<dbReference type="PROSITE" id="PS00154">
    <property type="entry name" value="ATPASE_E1_E2"/>
    <property type="match status" value="1"/>
</dbReference>
<protein>
    <recommendedName>
        <fullName evidence="1">Potassium-transporting ATPase ATP-binding subunit</fullName>
        <ecNumber evidence="1">7.2.2.6</ecNumber>
    </recommendedName>
    <alternativeName>
        <fullName evidence="1">ATP phosphohydrolase [potassium-transporting] B chain</fullName>
    </alternativeName>
    <alternativeName>
        <fullName evidence="1">Potassium-binding and translocating subunit B</fullName>
    </alternativeName>
    <alternativeName>
        <fullName evidence="1">Potassium-translocating ATPase B chain</fullName>
    </alternativeName>
</protein>
<name>KDPB_ERWT9</name>
<sequence length="682" mass="71717">MSRNQLALFDAALMRVALLDALKKLDPRTQVRNPVMFVVWLGSVVTTLLAVAMAAGKTPGDTGFTVAISVWLWFTVLFANFAEALAEGRSKAQANSLKGVTKTSFAKKLNEAKYGTSHYPVAADTLRKGDWVLVEAGDIIPCDGEVLEGGASVDESAITGESAPVIRESGGDFSSVTGGTRILSDWLVVQCSVNPGETFLDRMIAMVEGATRRKTPNEIALTILLLALTIVLLLATVTLWPFSAWGGNPVSITVLVALLVCLIPTTIGGLLSAIGVAGMSRMLGANVIATSGRAVEAAGDVDVLLLDKTGTITLGNRQATQFLPAAGVSEEQLADAAQLASLADETPEGRSIVVLAKQKFNLRERDLNSMGATFIPFSAQTRMSGVNVQQRAIRKGAADAVRRYIDSNGGQFPGEVNSLVDRVARAGGTPLVVSDGNRVMGVVALKDIVKGGIKERFAELRKMGIKTVMITGDNPLTAAAIAAEAGVDDFLSEATPEAKLALIRQYQAEGRLVAMTGDGTNDAPALAQADVAVAMNSGTQAAKEAGNMVDLDSNPTKLLEVVHIGKQMLMTRGSLTTFSIANDVAKYFAILPAAFAATYPQLNQLNVMGLHSPASAILSAVIFNALVIVFLIPLALKGVSYRALSAAALLRRNLWIYGVGGLLVPFLGIKLIDMLLTVTGLA</sequence>
<organism>
    <name type="scientific">Erwinia tasmaniensis (strain DSM 17950 / CFBP 7177 / CIP 109463 / NCPPB 4357 / Et1/99)</name>
    <dbReference type="NCBI Taxonomy" id="465817"/>
    <lineage>
        <taxon>Bacteria</taxon>
        <taxon>Pseudomonadati</taxon>
        <taxon>Pseudomonadota</taxon>
        <taxon>Gammaproteobacteria</taxon>
        <taxon>Enterobacterales</taxon>
        <taxon>Erwiniaceae</taxon>
        <taxon>Erwinia</taxon>
    </lineage>
</organism>